<dbReference type="EMBL" id="CP001120">
    <property type="protein sequence ID" value="ACF69106.1"/>
    <property type="molecule type" value="Genomic_DNA"/>
</dbReference>
<dbReference type="RefSeq" id="WP_000157589.1">
    <property type="nucleotide sequence ID" value="NC_011083.1"/>
</dbReference>
<dbReference type="SMR" id="B4TKT3"/>
<dbReference type="KEGG" id="seh:SeHA_C3814"/>
<dbReference type="HOGENOM" id="CLU_189182_0_0_6"/>
<dbReference type="Proteomes" id="UP000001866">
    <property type="component" value="Chromosome"/>
</dbReference>
<dbReference type="GO" id="GO:0003677">
    <property type="term" value="F:DNA binding"/>
    <property type="evidence" value="ECO:0007669"/>
    <property type="project" value="UniProtKB-KW"/>
</dbReference>
<dbReference type="GO" id="GO:0005506">
    <property type="term" value="F:iron ion binding"/>
    <property type="evidence" value="ECO:0007669"/>
    <property type="project" value="UniProtKB-UniRule"/>
</dbReference>
<dbReference type="GO" id="GO:0051536">
    <property type="term" value="F:iron-sulfur cluster binding"/>
    <property type="evidence" value="ECO:0007669"/>
    <property type="project" value="UniProtKB-KW"/>
</dbReference>
<dbReference type="Gene3D" id="1.10.10.10">
    <property type="entry name" value="Winged helix-like DNA-binding domain superfamily/Winged helix DNA-binding domain"/>
    <property type="match status" value="1"/>
</dbReference>
<dbReference type="HAMAP" id="MF_01586">
    <property type="entry name" value="FeoC"/>
    <property type="match status" value="1"/>
</dbReference>
<dbReference type="InterPro" id="IPR023732">
    <property type="entry name" value="FeoC"/>
</dbReference>
<dbReference type="InterPro" id="IPR015102">
    <property type="entry name" value="Tscrpt_reg_HTH_FeoC"/>
</dbReference>
<dbReference type="InterPro" id="IPR036388">
    <property type="entry name" value="WH-like_DNA-bd_sf"/>
</dbReference>
<dbReference type="InterPro" id="IPR036390">
    <property type="entry name" value="WH_DNA-bd_sf"/>
</dbReference>
<dbReference type="NCBIfam" id="NF011960">
    <property type="entry name" value="PRK15431.1"/>
    <property type="match status" value="1"/>
</dbReference>
<dbReference type="Pfam" id="PF09012">
    <property type="entry name" value="FeoC"/>
    <property type="match status" value="1"/>
</dbReference>
<dbReference type="SUPFAM" id="SSF46785">
    <property type="entry name" value="Winged helix' DNA-binding domain"/>
    <property type="match status" value="1"/>
</dbReference>
<protein>
    <recommendedName>
        <fullName evidence="1">Probable [Fe-S]-dependent transcriptional repressor</fullName>
    </recommendedName>
</protein>
<organism>
    <name type="scientific">Salmonella heidelberg (strain SL476)</name>
    <dbReference type="NCBI Taxonomy" id="454169"/>
    <lineage>
        <taxon>Bacteria</taxon>
        <taxon>Pseudomonadati</taxon>
        <taxon>Pseudomonadota</taxon>
        <taxon>Gammaproteobacteria</taxon>
        <taxon>Enterobacterales</taxon>
        <taxon>Enterobacteriaceae</taxon>
        <taxon>Salmonella</taxon>
    </lineage>
</organism>
<keyword id="KW-0238">DNA-binding</keyword>
<keyword id="KW-0408">Iron</keyword>
<keyword id="KW-0411">Iron-sulfur</keyword>
<keyword id="KW-0479">Metal-binding</keyword>
<keyword id="KW-0678">Repressor</keyword>
<keyword id="KW-0804">Transcription</keyword>
<keyword id="KW-0805">Transcription regulation</keyword>
<comment type="function">
    <text evidence="1">May function as a transcriptional regulator that controls feoABC expression.</text>
</comment>
<comment type="similarity">
    <text evidence="1">Belongs to the FeoC family.</text>
</comment>
<sequence>MASLIQVRDLLALRGRMEATQISHTLHAPQPMIDAMLNQLEIMGKAVRIPEEPDGCLSGSCKSCPEGKACLREWWALR</sequence>
<accession>B4TKT3</accession>
<gene>
    <name evidence="1" type="primary">feoC</name>
    <name type="ordered locus">SeHA_C3814</name>
</gene>
<proteinExistence type="inferred from homology"/>
<evidence type="ECO:0000255" key="1">
    <source>
        <dbReference type="HAMAP-Rule" id="MF_01586"/>
    </source>
</evidence>
<feature type="chain" id="PRO_1000201334" description="Probable [Fe-S]-dependent transcriptional repressor">
    <location>
        <begin position="1"/>
        <end position="78"/>
    </location>
</feature>
<feature type="binding site" evidence="1">
    <location>
        <position position="56"/>
    </location>
    <ligand>
        <name>iron-sulfur cluster</name>
        <dbReference type="ChEBI" id="CHEBI:30408"/>
    </ligand>
</feature>
<feature type="binding site" evidence="1">
    <location>
        <position position="61"/>
    </location>
    <ligand>
        <name>iron-sulfur cluster</name>
        <dbReference type="ChEBI" id="CHEBI:30408"/>
    </ligand>
</feature>
<feature type="binding site" evidence="1">
    <location>
        <position position="64"/>
    </location>
    <ligand>
        <name>iron-sulfur cluster</name>
        <dbReference type="ChEBI" id="CHEBI:30408"/>
    </ligand>
</feature>
<feature type="binding site" evidence="1">
    <location>
        <position position="70"/>
    </location>
    <ligand>
        <name>iron-sulfur cluster</name>
        <dbReference type="ChEBI" id="CHEBI:30408"/>
    </ligand>
</feature>
<name>FEOC_SALHS</name>
<reference key="1">
    <citation type="journal article" date="2011" name="J. Bacteriol.">
        <title>Comparative genomics of 28 Salmonella enterica isolates: evidence for CRISPR-mediated adaptive sublineage evolution.</title>
        <authorList>
            <person name="Fricke W.F."/>
            <person name="Mammel M.K."/>
            <person name="McDermott P.F."/>
            <person name="Tartera C."/>
            <person name="White D.G."/>
            <person name="Leclerc J.E."/>
            <person name="Ravel J."/>
            <person name="Cebula T.A."/>
        </authorList>
    </citation>
    <scope>NUCLEOTIDE SEQUENCE [LARGE SCALE GENOMIC DNA]</scope>
    <source>
        <strain>SL476</strain>
    </source>
</reference>